<feature type="chain" id="PRO_1000164887" description="Cyclic pyranopterin monophosphate synthase">
    <location>
        <begin position="1"/>
        <end position="163"/>
    </location>
</feature>
<feature type="active site" evidence="1">
    <location>
        <position position="126"/>
    </location>
</feature>
<feature type="binding site" evidence="1">
    <location>
        <begin position="74"/>
        <end position="76"/>
    </location>
    <ligand>
        <name>substrate</name>
    </ligand>
</feature>
<feature type="binding site" evidence="1">
    <location>
        <begin position="111"/>
        <end position="112"/>
    </location>
    <ligand>
        <name>substrate</name>
    </ligand>
</feature>
<sequence length="163" mass="17497">MELTHFDEEGRARMVDVSAKAETTRVATARGKVEMQAETLERIRSGQIAKGDVLAVAQVAGIMAAKQTSNVIPMCHPLAITGAKLNFEIVPPGTIEIEGIVKVTGKTGVEMEALTAVSVAALTIYDMCKAIDKTMVISDIRLMEKTGGKSGHFIREDHLKSTT</sequence>
<name>MOAC_DESHD</name>
<dbReference type="EC" id="4.6.1.17" evidence="1"/>
<dbReference type="EMBL" id="CP001336">
    <property type="protein sequence ID" value="ACL19457.1"/>
    <property type="molecule type" value="Genomic_DNA"/>
</dbReference>
<dbReference type="RefSeq" id="WP_015943408.1">
    <property type="nucleotide sequence ID" value="NC_011830.1"/>
</dbReference>
<dbReference type="SMR" id="B8FNT2"/>
<dbReference type="KEGG" id="dhd:Dhaf_1401"/>
<dbReference type="HOGENOM" id="CLU_074693_1_1_9"/>
<dbReference type="UniPathway" id="UPA00344"/>
<dbReference type="Proteomes" id="UP000007726">
    <property type="component" value="Chromosome"/>
</dbReference>
<dbReference type="GO" id="GO:0061799">
    <property type="term" value="F:cyclic pyranopterin monophosphate synthase activity"/>
    <property type="evidence" value="ECO:0007669"/>
    <property type="project" value="UniProtKB-UniRule"/>
</dbReference>
<dbReference type="GO" id="GO:0006777">
    <property type="term" value="P:Mo-molybdopterin cofactor biosynthetic process"/>
    <property type="evidence" value="ECO:0007669"/>
    <property type="project" value="UniProtKB-UniRule"/>
</dbReference>
<dbReference type="CDD" id="cd01420">
    <property type="entry name" value="MoaC_PE"/>
    <property type="match status" value="1"/>
</dbReference>
<dbReference type="Gene3D" id="3.30.70.640">
    <property type="entry name" value="Molybdopterin cofactor biosynthesis C (MoaC) domain"/>
    <property type="match status" value="1"/>
</dbReference>
<dbReference type="HAMAP" id="MF_01224_B">
    <property type="entry name" value="MoaC_B"/>
    <property type="match status" value="1"/>
</dbReference>
<dbReference type="InterPro" id="IPR023045">
    <property type="entry name" value="MoaC"/>
</dbReference>
<dbReference type="InterPro" id="IPR047594">
    <property type="entry name" value="MoaC_bact/euk"/>
</dbReference>
<dbReference type="InterPro" id="IPR036522">
    <property type="entry name" value="MoaC_sf"/>
</dbReference>
<dbReference type="InterPro" id="IPR050105">
    <property type="entry name" value="MoCo_biosynth_MoaA/MoaC"/>
</dbReference>
<dbReference type="InterPro" id="IPR002820">
    <property type="entry name" value="Mopterin_CF_biosynth-C_dom"/>
</dbReference>
<dbReference type="NCBIfam" id="TIGR00581">
    <property type="entry name" value="moaC"/>
    <property type="match status" value="1"/>
</dbReference>
<dbReference type="NCBIfam" id="NF006870">
    <property type="entry name" value="PRK09364.1"/>
    <property type="match status" value="1"/>
</dbReference>
<dbReference type="PANTHER" id="PTHR22960:SF29">
    <property type="entry name" value="CYCLIC PYRANOPTERIN MONOPHOSPHATE SYNTHASE"/>
    <property type="match status" value="1"/>
</dbReference>
<dbReference type="PANTHER" id="PTHR22960">
    <property type="entry name" value="MOLYBDOPTERIN COFACTOR SYNTHESIS PROTEIN A"/>
    <property type="match status" value="1"/>
</dbReference>
<dbReference type="Pfam" id="PF01967">
    <property type="entry name" value="MoaC"/>
    <property type="match status" value="1"/>
</dbReference>
<dbReference type="SUPFAM" id="SSF55040">
    <property type="entry name" value="Molybdenum cofactor biosynthesis protein C, MoaC"/>
    <property type="match status" value="1"/>
</dbReference>
<reference key="1">
    <citation type="journal article" date="2012" name="BMC Microbiol.">
        <title>Genome sequence of Desulfitobacterium hafniense DCB-2, a Gram-positive anaerobe capable of dehalogenation and metal reduction.</title>
        <authorList>
            <person name="Kim S.H."/>
            <person name="Harzman C."/>
            <person name="Davis J.K."/>
            <person name="Hutcheson R."/>
            <person name="Broderick J.B."/>
            <person name="Marsh T.L."/>
            <person name="Tiedje J.M."/>
        </authorList>
    </citation>
    <scope>NUCLEOTIDE SEQUENCE [LARGE SCALE GENOMIC DNA]</scope>
    <source>
        <strain>DSM 10664 / DCB-2</strain>
    </source>
</reference>
<gene>
    <name evidence="1" type="primary">moaC</name>
    <name type="ordered locus">Dhaf_1401</name>
</gene>
<protein>
    <recommendedName>
        <fullName evidence="1">Cyclic pyranopterin monophosphate synthase</fullName>
        <ecNumber evidence="1">4.6.1.17</ecNumber>
    </recommendedName>
    <alternativeName>
        <fullName evidence="1">Molybdenum cofactor biosynthesis protein C</fullName>
    </alternativeName>
</protein>
<evidence type="ECO:0000255" key="1">
    <source>
        <dbReference type="HAMAP-Rule" id="MF_01224"/>
    </source>
</evidence>
<accession>B8FNT2</accession>
<keyword id="KW-0456">Lyase</keyword>
<keyword id="KW-0501">Molybdenum cofactor biosynthesis</keyword>
<organism>
    <name type="scientific">Desulfitobacterium hafniense (strain DSM 10664 / DCB-2)</name>
    <dbReference type="NCBI Taxonomy" id="272564"/>
    <lineage>
        <taxon>Bacteria</taxon>
        <taxon>Bacillati</taxon>
        <taxon>Bacillota</taxon>
        <taxon>Clostridia</taxon>
        <taxon>Eubacteriales</taxon>
        <taxon>Desulfitobacteriaceae</taxon>
        <taxon>Desulfitobacterium</taxon>
    </lineage>
</organism>
<proteinExistence type="inferred from homology"/>
<comment type="function">
    <text evidence="1">Catalyzes the conversion of (8S)-3',8-cyclo-7,8-dihydroguanosine 5'-triphosphate to cyclic pyranopterin monophosphate (cPMP).</text>
</comment>
<comment type="catalytic activity">
    <reaction evidence="1">
        <text>(8S)-3',8-cyclo-7,8-dihydroguanosine 5'-triphosphate = cyclic pyranopterin phosphate + diphosphate</text>
        <dbReference type="Rhea" id="RHEA:49580"/>
        <dbReference type="ChEBI" id="CHEBI:33019"/>
        <dbReference type="ChEBI" id="CHEBI:59648"/>
        <dbReference type="ChEBI" id="CHEBI:131766"/>
        <dbReference type="EC" id="4.6.1.17"/>
    </reaction>
</comment>
<comment type="pathway">
    <text evidence="1">Cofactor biosynthesis; molybdopterin biosynthesis.</text>
</comment>
<comment type="subunit">
    <text evidence="1">Homohexamer; trimer of dimers.</text>
</comment>
<comment type="similarity">
    <text evidence="1">Belongs to the MoaC family.</text>
</comment>